<organism>
    <name type="scientific">Cellvibrio japonicus (strain Ueda107)</name>
    <name type="common">Pseudomonas fluorescens subsp. cellulosa</name>
    <dbReference type="NCBI Taxonomy" id="498211"/>
    <lineage>
        <taxon>Bacteria</taxon>
        <taxon>Pseudomonadati</taxon>
        <taxon>Pseudomonadota</taxon>
        <taxon>Gammaproteobacteria</taxon>
        <taxon>Cellvibrionales</taxon>
        <taxon>Cellvibrionaceae</taxon>
        <taxon>Cellvibrio</taxon>
    </lineage>
</organism>
<feature type="chain" id="PRO_1000128348" description="Small ribosomal subunit protein uS14">
    <location>
        <begin position="1"/>
        <end position="101"/>
    </location>
</feature>
<evidence type="ECO:0000255" key="1">
    <source>
        <dbReference type="HAMAP-Rule" id="MF_00537"/>
    </source>
</evidence>
<evidence type="ECO:0000305" key="2"/>
<comment type="function">
    <text evidence="1">Binds 16S rRNA, required for the assembly of 30S particles and may also be responsible for determining the conformation of the 16S rRNA at the A site.</text>
</comment>
<comment type="subunit">
    <text evidence="1">Part of the 30S ribosomal subunit. Contacts proteins S3 and S10.</text>
</comment>
<comment type="similarity">
    <text evidence="1">Belongs to the universal ribosomal protein uS14 family.</text>
</comment>
<protein>
    <recommendedName>
        <fullName evidence="1">Small ribosomal subunit protein uS14</fullName>
    </recommendedName>
    <alternativeName>
        <fullName evidence="2">30S ribosomal protein S14</fullName>
    </alternativeName>
</protein>
<proteinExistence type="inferred from homology"/>
<reference key="1">
    <citation type="journal article" date="2008" name="J. Bacteriol.">
        <title>Insights into plant cell wall degradation from the genome sequence of the soil bacterium Cellvibrio japonicus.</title>
        <authorList>
            <person name="DeBoy R.T."/>
            <person name="Mongodin E.F."/>
            <person name="Fouts D.E."/>
            <person name="Tailford L.E."/>
            <person name="Khouri H."/>
            <person name="Emerson J.B."/>
            <person name="Mohamoud Y."/>
            <person name="Watkins K."/>
            <person name="Henrissat B."/>
            <person name="Gilbert H.J."/>
            <person name="Nelson K.E."/>
        </authorList>
    </citation>
    <scope>NUCLEOTIDE SEQUENCE [LARGE SCALE GENOMIC DNA]</scope>
    <source>
        <strain>Ueda107</strain>
    </source>
</reference>
<gene>
    <name evidence="1" type="primary">rpsN</name>
    <name type="ordered locus">CJA_0712</name>
</gene>
<accession>B3PK50</accession>
<sequence length="101" mass="11418">MAKKSMIAREVKRAETAKKFAAKRAELKAIIASASSSEEQIWEAQTKLQQLPRDASPSRQRNRCRVTGRPHGVYRKFGLCRHKLREAAMRGDVPGLVKASW</sequence>
<dbReference type="EMBL" id="CP000934">
    <property type="protein sequence ID" value="ACE84442.1"/>
    <property type="molecule type" value="Genomic_DNA"/>
</dbReference>
<dbReference type="RefSeq" id="WP_012486375.1">
    <property type="nucleotide sequence ID" value="NC_010995.1"/>
</dbReference>
<dbReference type="SMR" id="B3PK50"/>
<dbReference type="STRING" id="498211.CJA_0712"/>
<dbReference type="KEGG" id="cja:CJA_0712"/>
<dbReference type="eggNOG" id="COG0199">
    <property type="taxonomic scope" value="Bacteria"/>
</dbReference>
<dbReference type="HOGENOM" id="CLU_139869_0_1_6"/>
<dbReference type="OrthoDB" id="9810484at2"/>
<dbReference type="Proteomes" id="UP000001036">
    <property type="component" value="Chromosome"/>
</dbReference>
<dbReference type="GO" id="GO:0005737">
    <property type="term" value="C:cytoplasm"/>
    <property type="evidence" value="ECO:0007669"/>
    <property type="project" value="UniProtKB-ARBA"/>
</dbReference>
<dbReference type="GO" id="GO:0015935">
    <property type="term" value="C:small ribosomal subunit"/>
    <property type="evidence" value="ECO:0007669"/>
    <property type="project" value="TreeGrafter"/>
</dbReference>
<dbReference type="GO" id="GO:0019843">
    <property type="term" value="F:rRNA binding"/>
    <property type="evidence" value="ECO:0007669"/>
    <property type="project" value="UniProtKB-UniRule"/>
</dbReference>
<dbReference type="GO" id="GO:0003735">
    <property type="term" value="F:structural constituent of ribosome"/>
    <property type="evidence" value="ECO:0007669"/>
    <property type="project" value="InterPro"/>
</dbReference>
<dbReference type="GO" id="GO:0006412">
    <property type="term" value="P:translation"/>
    <property type="evidence" value="ECO:0007669"/>
    <property type="project" value="UniProtKB-UniRule"/>
</dbReference>
<dbReference type="FunFam" id="1.10.287.1480:FF:000001">
    <property type="entry name" value="30S ribosomal protein S14"/>
    <property type="match status" value="1"/>
</dbReference>
<dbReference type="Gene3D" id="1.10.287.1480">
    <property type="match status" value="1"/>
</dbReference>
<dbReference type="HAMAP" id="MF_00537">
    <property type="entry name" value="Ribosomal_uS14_1"/>
    <property type="match status" value="1"/>
</dbReference>
<dbReference type="InterPro" id="IPR001209">
    <property type="entry name" value="Ribosomal_uS14"/>
</dbReference>
<dbReference type="InterPro" id="IPR023036">
    <property type="entry name" value="Ribosomal_uS14_bac/plastid"/>
</dbReference>
<dbReference type="InterPro" id="IPR018271">
    <property type="entry name" value="Ribosomal_uS14_CS"/>
</dbReference>
<dbReference type="NCBIfam" id="NF006477">
    <property type="entry name" value="PRK08881.1"/>
    <property type="match status" value="1"/>
</dbReference>
<dbReference type="PANTHER" id="PTHR19836">
    <property type="entry name" value="30S RIBOSOMAL PROTEIN S14"/>
    <property type="match status" value="1"/>
</dbReference>
<dbReference type="PANTHER" id="PTHR19836:SF19">
    <property type="entry name" value="SMALL RIBOSOMAL SUBUNIT PROTEIN US14M"/>
    <property type="match status" value="1"/>
</dbReference>
<dbReference type="Pfam" id="PF00253">
    <property type="entry name" value="Ribosomal_S14"/>
    <property type="match status" value="1"/>
</dbReference>
<dbReference type="SUPFAM" id="SSF57716">
    <property type="entry name" value="Glucocorticoid receptor-like (DNA-binding domain)"/>
    <property type="match status" value="1"/>
</dbReference>
<dbReference type="PROSITE" id="PS00527">
    <property type="entry name" value="RIBOSOMAL_S14"/>
    <property type="match status" value="1"/>
</dbReference>
<keyword id="KW-1185">Reference proteome</keyword>
<keyword id="KW-0687">Ribonucleoprotein</keyword>
<keyword id="KW-0689">Ribosomal protein</keyword>
<keyword id="KW-0694">RNA-binding</keyword>
<keyword id="KW-0699">rRNA-binding</keyword>
<name>RS14_CELJU</name>